<comment type="function">
    <text evidence="2">Cell wall formation.</text>
</comment>
<comment type="catalytic activity">
    <reaction evidence="2">
        <text>2 D-alanine + ATP = D-alanyl-D-alanine + ADP + phosphate + H(+)</text>
        <dbReference type="Rhea" id="RHEA:11224"/>
        <dbReference type="ChEBI" id="CHEBI:15378"/>
        <dbReference type="ChEBI" id="CHEBI:30616"/>
        <dbReference type="ChEBI" id="CHEBI:43474"/>
        <dbReference type="ChEBI" id="CHEBI:57416"/>
        <dbReference type="ChEBI" id="CHEBI:57822"/>
        <dbReference type="ChEBI" id="CHEBI:456216"/>
        <dbReference type="EC" id="6.3.2.4"/>
    </reaction>
</comment>
<comment type="cofactor">
    <cofactor evidence="1">
        <name>Mg(2+)</name>
        <dbReference type="ChEBI" id="CHEBI:18420"/>
    </cofactor>
    <cofactor evidence="1">
        <name>Mn(2+)</name>
        <dbReference type="ChEBI" id="CHEBI:29035"/>
    </cofactor>
    <text evidence="1">Binds 2 magnesium or manganese ions per subunit.</text>
</comment>
<comment type="pathway">
    <text evidence="2">Cell wall biogenesis; peptidoglycan biosynthesis.</text>
</comment>
<comment type="subcellular location">
    <subcellularLocation>
        <location evidence="2">Cytoplasm</location>
    </subcellularLocation>
</comment>
<comment type="similarity">
    <text evidence="2">Belongs to the D-alanine--D-alanine ligase family.</text>
</comment>
<protein>
    <recommendedName>
        <fullName evidence="2">D-alanine--D-alanine ligase</fullName>
        <ecNumber evidence="2">6.3.2.4</ecNumber>
    </recommendedName>
    <alternativeName>
        <fullName evidence="2">D-Ala-D-Ala ligase</fullName>
    </alternativeName>
    <alternativeName>
        <fullName evidence="2">D-alanylalanine synthetase</fullName>
    </alternativeName>
</protein>
<evidence type="ECO:0000250" key="1"/>
<evidence type="ECO:0000255" key="2">
    <source>
        <dbReference type="HAMAP-Rule" id="MF_00047"/>
    </source>
</evidence>
<proteinExistence type="inferred from homology"/>
<gene>
    <name evidence="2" type="primary">ddl</name>
    <name type="ordered locus">MAP_3019c</name>
</gene>
<sequence>MNASQRVRVAVVFGGRSNEHAISCVSAGSILRNLDPRRFEVVAIGITPQGSWVLTDGDPAALAISDRQLPEVTSASGTELALPADPGRSGQLVSLPPGASEVLASVDVVFPVLHGPYGEDGTIQGLLELAGVPYVGAGVFASAAGMDKEFTKKLFAAEGLPIGDYAVLRPSQSTLSLQDRERLGLPVFVKPARGGSSIGVSRVSSWDELDAAVAAARDHDPKVIVEAAIAGRELECGVLEMPDGTVQASTVGEIRVAGVRGREDSFYDFATKYLDDTAELDVPAKVDDEIADAVRELAIRAFKAVDCQGLARVDFFLTETGPVLNEINTMPGFTTISMYPRMWAASGVDYPSLLATMVETALARGVGLR</sequence>
<keyword id="KW-0067">ATP-binding</keyword>
<keyword id="KW-0133">Cell shape</keyword>
<keyword id="KW-0961">Cell wall biogenesis/degradation</keyword>
<keyword id="KW-0963">Cytoplasm</keyword>
<keyword id="KW-0436">Ligase</keyword>
<keyword id="KW-0460">Magnesium</keyword>
<keyword id="KW-0464">Manganese</keyword>
<keyword id="KW-0479">Metal-binding</keyword>
<keyword id="KW-0547">Nucleotide-binding</keyword>
<keyword id="KW-0573">Peptidoglycan synthesis</keyword>
<keyword id="KW-1185">Reference proteome</keyword>
<reference key="1">
    <citation type="journal article" date="2005" name="Proc. Natl. Acad. Sci. U.S.A.">
        <title>The complete genome sequence of Mycobacterium avium subspecies paratuberculosis.</title>
        <authorList>
            <person name="Li L."/>
            <person name="Bannantine J.P."/>
            <person name="Zhang Q."/>
            <person name="Amonsin A."/>
            <person name="May B.J."/>
            <person name="Alt D."/>
            <person name="Banerji N."/>
            <person name="Kanjilal S."/>
            <person name="Kapur V."/>
        </authorList>
    </citation>
    <scope>NUCLEOTIDE SEQUENCE [LARGE SCALE GENOMIC DNA]</scope>
    <source>
        <strain>ATCC BAA-968 / K-10</strain>
    </source>
</reference>
<name>DDL_MYCPA</name>
<feature type="chain" id="PRO_1000074778" description="D-alanine--D-alanine ligase">
    <location>
        <begin position="1"/>
        <end position="369"/>
    </location>
</feature>
<feature type="domain" description="ATP-grasp" evidence="2">
    <location>
        <begin position="152"/>
        <end position="359"/>
    </location>
</feature>
<feature type="binding site" evidence="2">
    <location>
        <begin position="180"/>
        <end position="235"/>
    </location>
    <ligand>
        <name>ATP</name>
        <dbReference type="ChEBI" id="CHEBI:30616"/>
    </ligand>
</feature>
<feature type="binding site" evidence="2">
    <location>
        <position position="314"/>
    </location>
    <ligand>
        <name>Mg(2+)</name>
        <dbReference type="ChEBI" id="CHEBI:18420"/>
        <label>1</label>
    </ligand>
</feature>
<feature type="binding site" evidence="2">
    <location>
        <position position="326"/>
    </location>
    <ligand>
        <name>Mg(2+)</name>
        <dbReference type="ChEBI" id="CHEBI:18420"/>
        <label>1</label>
    </ligand>
</feature>
<feature type="binding site" evidence="2">
    <location>
        <position position="326"/>
    </location>
    <ligand>
        <name>Mg(2+)</name>
        <dbReference type="ChEBI" id="CHEBI:18420"/>
        <label>2</label>
    </ligand>
</feature>
<feature type="binding site" evidence="2">
    <location>
        <position position="328"/>
    </location>
    <ligand>
        <name>Mg(2+)</name>
        <dbReference type="ChEBI" id="CHEBI:18420"/>
        <label>2</label>
    </ligand>
</feature>
<accession>Q73VJ4</accession>
<dbReference type="EC" id="6.3.2.4" evidence="2"/>
<dbReference type="EMBL" id="AE016958">
    <property type="protein sequence ID" value="AAS05567.1"/>
    <property type="molecule type" value="Genomic_DNA"/>
</dbReference>
<dbReference type="RefSeq" id="WP_003875024.1">
    <property type="nucleotide sequence ID" value="NZ_CP106873.1"/>
</dbReference>
<dbReference type="SMR" id="Q73VJ4"/>
<dbReference type="STRING" id="262316.MAP_3019c"/>
<dbReference type="KEGG" id="mpa:MAP_3019c"/>
<dbReference type="eggNOG" id="COG1181">
    <property type="taxonomic scope" value="Bacteria"/>
</dbReference>
<dbReference type="HOGENOM" id="CLU_039268_0_1_11"/>
<dbReference type="UniPathway" id="UPA00219"/>
<dbReference type="Proteomes" id="UP000000580">
    <property type="component" value="Chromosome"/>
</dbReference>
<dbReference type="GO" id="GO:0005829">
    <property type="term" value="C:cytosol"/>
    <property type="evidence" value="ECO:0007669"/>
    <property type="project" value="TreeGrafter"/>
</dbReference>
<dbReference type="GO" id="GO:0005524">
    <property type="term" value="F:ATP binding"/>
    <property type="evidence" value="ECO:0007669"/>
    <property type="project" value="UniProtKB-KW"/>
</dbReference>
<dbReference type="GO" id="GO:0008716">
    <property type="term" value="F:D-alanine-D-alanine ligase activity"/>
    <property type="evidence" value="ECO:0007669"/>
    <property type="project" value="UniProtKB-UniRule"/>
</dbReference>
<dbReference type="GO" id="GO:0046872">
    <property type="term" value="F:metal ion binding"/>
    <property type="evidence" value="ECO:0007669"/>
    <property type="project" value="UniProtKB-KW"/>
</dbReference>
<dbReference type="GO" id="GO:0071555">
    <property type="term" value="P:cell wall organization"/>
    <property type="evidence" value="ECO:0007669"/>
    <property type="project" value="UniProtKB-KW"/>
</dbReference>
<dbReference type="GO" id="GO:0009252">
    <property type="term" value="P:peptidoglycan biosynthetic process"/>
    <property type="evidence" value="ECO:0007669"/>
    <property type="project" value="UniProtKB-UniRule"/>
</dbReference>
<dbReference type="GO" id="GO:0008360">
    <property type="term" value="P:regulation of cell shape"/>
    <property type="evidence" value="ECO:0007669"/>
    <property type="project" value="UniProtKB-KW"/>
</dbReference>
<dbReference type="FunFam" id="3.30.470.20:FF:000008">
    <property type="entry name" value="D-alanine--D-alanine ligase"/>
    <property type="match status" value="1"/>
</dbReference>
<dbReference type="Gene3D" id="3.40.50.20">
    <property type="match status" value="1"/>
</dbReference>
<dbReference type="Gene3D" id="3.30.1490.20">
    <property type="entry name" value="ATP-grasp fold, A domain"/>
    <property type="match status" value="1"/>
</dbReference>
<dbReference type="Gene3D" id="3.30.470.20">
    <property type="entry name" value="ATP-grasp fold, B domain"/>
    <property type="match status" value="1"/>
</dbReference>
<dbReference type="HAMAP" id="MF_00047">
    <property type="entry name" value="Dala_Dala_lig"/>
    <property type="match status" value="1"/>
</dbReference>
<dbReference type="InterPro" id="IPR011761">
    <property type="entry name" value="ATP-grasp"/>
</dbReference>
<dbReference type="InterPro" id="IPR013815">
    <property type="entry name" value="ATP_grasp_subdomain_1"/>
</dbReference>
<dbReference type="InterPro" id="IPR000291">
    <property type="entry name" value="D-Ala_lig_Van_CS"/>
</dbReference>
<dbReference type="InterPro" id="IPR005905">
    <property type="entry name" value="D_ala_D_ala"/>
</dbReference>
<dbReference type="InterPro" id="IPR011095">
    <property type="entry name" value="Dala_Dala_lig_C"/>
</dbReference>
<dbReference type="InterPro" id="IPR011127">
    <property type="entry name" value="Dala_Dala_lig_N"/>
</dbReference>
<dbReference type="InterPro" id="IPR016185">
    <property type="entry name" value="PreATP-grasp_dom_sf"/>
</dbReference>
<dbReference type="NCBIfam" id="TIGR01205">
    <property type="entry name" value="D_ala_D_alaTIGR"/>
    <property type="match status" value="1"/>
</dbReference>
<dbReference type="NCBIfam" id="NF002378">
    <property type="entry name" value="PRK01372.1"/>
    <property type="match status" value="1"/>
</dbReference>
<dbReference type="NCBIfam" id="NF002528">
    <property type="entry name" value="PRK01966.1-4"/>
    <property type="match status" value="1"/>
</dbReference>
<dbReference type="PANTHER" id="PTHR23132">
    <property type="entry name" value="D-ALANINE--D-ALANINE LIGASE"/>
    <property type="match status" value="1"/>
</dbReference>
<dbReference type="PANTHER" id="PTHR23132:SF25">
    <property type="entry name" value="D-ALANINE--D-ALANINE LIGASE A"/>
    <property type="match status" value="1"/>
</dbReference>
<dbReference type="Pfam" id="PF07478">
    <property type="entry name" value="Dala_Dala_lig_C"/>
    <property type="match status" value="1"/>
</dbReference>
<dbReference type="Pfam" id="PF01820">
    <property type="entry name" value="Dala_Dala_lig_N"/>
    <property type="match status" value="1"/>
</dbReference>
<dbReference type="PIRSF" id="PIRSF039102">
    <property type="entry name" value="Ddl/VanB"/>
    <property type="match status" value="1"/>
</dbReference>
<dbReference type="SUPFAM" id="SSF56059">
    <property type="entry name" value="Glutathione synthetase ATP-binding domain-like"/>
    <property type="match status" value="1"/>
</dbReference>
<dbReference type="SUPFAM" id="SSF52440">
    <property type="entry name" value="PreATP-grasp domain"/>
    <property type="match status" value="1"/>
</dbReference>
<dbReference type="PROSITE" id="PS50975">
    <property type="entry name" value="ATP_GRASP"/>
    <property type="match status" value="1"/>
</dbReference>
<dbReference type="PROSITE" id="PS00843">
    <property type="entry name" value="DALA_DALA_LIGASE_1"/>
    <property type="match status" value="1"/>
</dbReference>
<dbReference type="PROSITE" id="PS00844">
    <property type="entry name" value="DALA_DALA_LIGASE_2"/>
    <property type="match status" value="1"/>
</dbReference>
<organism>
    <name type="scientific">Mycolicibacterium paratuberculosis (strain ATCC BAA-968 / K-10)</name>
    <name type="common">Mycobacterium paratuberculosis</name>
    <dbReference type="NCBI Taxonomy" id="262316"/>
    <lineage>
        <taxon>Bacteria</taxon>
        <taxon>Bacillati</taxon>
        <taxon>Actinomycetota</taxon>
        <taxon>Actinomycetes</taxon>
        <taxon>Mycobacteriales</taxon>
        <taxon>Mycobacteriaceae</taxon>
        <taxon>Mycobacterium</taxon>
        <taxon>Mycobacterium avium complex (MAC)</taxon>
    </lineage>
</organism>